<sequence>MGSREEELRFILHDLGVGPYFLGTFDKHFPGFISKDRMSCAIVNTAGRETGGVHWLAMAWHPASQTFYMFDPFGFSDQKLKQIYNFEYQGLLKRSALTSTADRCLTLIQSTQSVQGPNSAACGLFCCMFLHAFVRWPLRAMDNNPTMNLIHGVPNNMLESPSSQNVFLRNQQNLYRFLRRHSPHFVKHAAQIEADTAFDKMLTN</sequence>
<dbReference type="EC" id="3.4.22.39" evidence="1"/>
<dbReference type="EMBL" id="X53990">
    <property type="protein sequence ID" value="CAA37937.1"/>
    <property type="molecule type" value="Genomic_DNA"/>
</dbReference>
<dbReference type="EMBL" id="AF030154">
    <property type="protein sequence ID" value="AAD09729.1"/>
    <property type="molecule type" value="Genomic_DNA"/>
</dbReference>
<dbReference type="PIR" id="S11460">
    <property type="entry name" value="S11460"/>
</dbReference>
<dbReference type="RefSeq" id="NP_046324.1">
    <property type="nucleotide sequence ID" value="NC_001876.1"/>
</dbReference>
<dbReference type="SMR" id="P19119"/>
<dbReference type="MEROPS" id="C05.001"/>
<dbReference type="KEGG" id="vg:2652959"/>
<dbReference type="OrthoDB" id="9248at10239"/>
<dbReference type="Proteomes" id="UP000140422">
    <property type="component" value="Genome"/>
</dbReference>
<dbReference type="GO" id="GO:0042025">
    <property type="term" value="C:host cell nucleus"/>
    <property type="evidence" value="ECO:0007669"/>
    <property type="project" value="UniProtKB-SubCell"/>
</dbReference>
<dbReference type="GO" id="GO:0044423">
    <property type="term" value="C:virion component"/>
    <property type="evidence" value="ECO:0007669"/>
    <property type="project" value="UniProtKB-UniRule"/>
</dbReference>
<dbReference type="GO" id="GO:0004197">
    <property type="term" value="F:cysteine-type endopeptidase activity"/>
    <property type="evidence" value="ECO:0007669"/>
    <property type="project" value="UniProtKB-UniRule"/>
</dbReference>
<dbReference type="GO" id="GO:0003677">
    <property type="term" value="F:DNA binding"/>
    <property type="evidence" value="ECO:0007669"/>
    <property type="project" value="UniProtKB-UniRule"/>
</dbReference>
<dbReference type="GO" id="GO:0006508">
    <property type="term" value="P:proteolysis"/>
    <property type="evidence" value="ECO:0007669"/>
    <property type="project" value="UniProtKB-KW"/>
</dbReference>
<dbReference type="Gene3D" id="3.40.395.10">
    <property type="entry name" value="Adenoviral Proteinase, Chain A"/>
    <property type="match status" value="1"/>
</dbReference>
<dbReference type="HAMAP" id="MF_04059">
    <property type="entry name" value="ADV_PRO"/>
    <property type="match status" value="1"/>
</dbReference>
<dbReference type="InterPro" id="IPR038765">
    <property type="entry name" value="Papain-like_cys_pep_sf"/>
</dbReference>
<dbReference type="InterPro" id="IPR000855">
    <property type="entry name" value="Peptidase_C5"/>
</dbReference>
<dbReference type="Pfam" id="PF00770">
    <property type="entry name" value="Peptidase_C5"/>
    <property type="match status" value="1"/>
</dbReference>
<dbReference type="PIRSF" id="PIRSF001218">
    <property type="entry name" value="Protease_ADV"/>
    <property type="match status" value="1"/>
</dbReference>
<dbReference type="PRINTS" id="PR00703">
    <property type="entry name" value="ADVENDOPTASE"/>
</dbReference>
<dbReference type="SUPFAM" id="SSF54001">
    <property type="entry name" value="Cysteine proteinases"/>
    <property type="match status" value="1"/>
</dbReference>
<protein>
    <recommendedName>
        <fullName evidence="1">Protease</fullName>
        <ecNumber evidence="1">3.4.22.39</ecNumber>
    </recommendedName>
    <alternativeName>
        <fullName evidence="1">Adenain</fullName>
    </alternativeName>
    <alternativeName>
        <fullName evidence="1">Adenovirus protease</fullName>
        <shortName evidence="1">AVP</shortName>
    </alternativeName>
    <alternativeName>
        <fullName evidence="1">Adenovirus proteinase</fullName>
    </alternativeName>
    <alternativeName>
        <fullName evidence="1">Endoprotease</fullName>
    </alternativeName>
</protein>
<name>PRO_ADEB3</name>
<proteinExistence type="inferred from homology"/>
<comment type="function">
    <text evidence="1">Cleaves viral precursor proteins (pTP, pIIIa, pVI, pVII, pVIII, and pX) inside newly assembled particles giving rise to mature virions. Protease complexed to its cofactor slides along the viral DNA to specifically locate and cleave the viral precursors. Mature virions have a weakened organization compared to the unmature virions, thereby facilitating subsequent uncoating. Without maturation, the particle lacks infectivity and is unable to uncoat. Late in adenovirus infection, in the cytoplasm, may participate in the cytoskeleton destruction. Cleaves host cell cytoskeletal keratins K7 and K18.</text>
</comment>
<comment type="catalytic activity">
    <reaction evidence="1">
        <text>Cleaves proteins of the adenovirus and its host cell at two consensus sites: -Yaa-Xaa-Gly-Gly-|-Xaa- and -Yaa-Xaa-Gly-Xaa-|-Gly- (in which Yaa is Met, Ile or Leu, and Xaa is any amino acid).</text>
        <dbReference type="EC" id="3.4.22.39"/>
    </reaction>
</comment>
<comment type="activity regulation">
    <text evidence="1">Requires DNA and protease cofactor for maximal activation. Inside nascent virions, becomes partially activated by binding to the viral DNA, allowing it to cleave the cofactor that binds to the protease and fully activates it. Actin, like the viral protease cofactor, seems to act as a cofactor in the cleavage of cytokeratin 18 and of actin itself.</text>
</comment>
<comment type="subunit">
    <text evidence="1">Interacts with protease cofactor pVI-C; this interaction is necessary for protease activation.</text>
</comment>
<comment type="subcellular location">
    <subcellularLocation>
        <location evidence="1">Virion</location>
    </subcellularLocation>
    <subcellularLocation>
        <location evidence="1">Host nucleus</location>
    </subcellularLocation>
    <text evidence="1">Present in about 10 copies per virion.</text>
</comment>
<comment type="induction">
    <text evidence="1">Expressed in the late phase of the viral replicative cycle.</text>
</comment>
<comment type="miscellaneous">
    <text evidence="1">All late proteins expressed from the major late promoter are produced by alternative splicing and alternative polyadenylation of the same gene giving rise to non-overlapping ORFs. A leader sequence is present in the N-terminus of all these mRNAs and is recognized by the viral shutoff protein to provide expression although conventional translation via ribosome scanning from the cap has been shut off in the host cell.</text>
</comment>
<comment type="similarity">
    <text evidence="1">Belongs to the peptidase C5 family.</text>
</comment>
<keyword id="KW-0068">Autocatalytic cleavage</keyword>
<keyword id="KW-1015">Disulfide bond</keyword>
<keyword id="KW-0238">DNA-binding</keyword>
<keyword id="KW-1048">Host nucleus</keyword>
<keyword id="KW-0378">Hydrolase</keyword>
<keyword id="KW-0426">Late protein</keyword>
<keyword id="KW-0645">Protease</keyword>
<keyword id="KW-1185">Reference proteome</keyword>
<keyword id="KW-0788">Thiol protease</keyword>
<keyword id="KW-0946">Virion</keyword>
<organismHost>
    <name type="scientific">Bos taurus</name>
    <name type="common">Bovine</name>
    <dbReference type="NCBI Taxonomy" id="9913"/>
</organismHost>
<evidence type="ECO:0000255" key="1">
    <source>
        <dbReference type="HAMAP-Rule" id="MF_04059"/>
    </source>
</evidence>
<reference key="1">
    <citation type="journal article" date="1990" name="Nucleic Acids Res.">
        <title>Nucleotide and deduced amino acid sequence of the bovine adenovirus type 3 proteinase.</title>
        <authorList>
            <person name="Cai F."/>
            <person name="Bourbonniere M."/>
            <person name="Tang D."/>
            <person name="Hu S.L."/>
            <person name="Weber J.M."/>
        </authorList>
    </citation>
    <scope>NUCLEOTIDE SEQUENCE [GENOMIC DNA]</scope>
</reference>
<reference key="2">
    <citation type="journal article" date="1998" name="J. Virol.">
        <title>Nucleotide sequence, genome organization, and transcription map of bovine adenovirus type 3.</title>
        <authorList>
            <person name="Reddy P.S."/>
            <person name="Idamakanti N."/>
            <person name="Zakhartchouk A.N."/>
            <person name="Baxi M.K."/>
            <person name="Lee J.B."/>
            <person name="Pyne C."/>
            <person name="Babiuk L.A."/>
            <person name="Tikoo S.K."/>
        </authorList>
    </citation>
    <scope>NUCLEOTIDE SEQUENCE [LARGE SCALE GENOMIC DNA]</scope>
    <source>
        <strain>WBR-1</strain>
    </source>
</reference>
<accession>P19119</accession>
<organism>
    <name type="scientific">Bovine adenovirus B serotype 3</name>
    <name type="common">BAdV-3</name>
    <name type="synonym">Mastadenovirus bos3</name>
    <dbReference type="NCBI Taxonomy" id="10510"/>
    <lineage>
        <taxon>Viruses</taxon>
        <taxon>Varidnaviria</taxon>
        <taxon>Bamfordvirae</taxon>
        <taxon>Preplasmiviricota</taxon>
        <taxon>Tectiliviricetes</taxon>
        <taxon>Rowavirales</taxon>
        <taxon>Adenoviridae</taxon>
        <taxon>Mastadenovirus</taxon>
        <taxon>Bovine mastadenovirus B</taxon>
    </lineage>
</organism>
<gene>
    <name evidence="1" type="primary">L3</name>
</gene>
<feature type="chain" id="PRO_0000218033" description="Protease">
    <location>
        <begin position="1"/>
        <end position="204"/>
    </location>
</feature>
<feature type="active site" evidence="1">
    <location>
        <position position="54"/>
    </location>
</feature>
<feature type="active site" evidence="1">
    <location>
        <position position="71"/>
    </location>
</feature>
<feature type="active site" evidence="1">
    <location>
        <position position="122"/>
    </location>
</feature>
<feature type="site" description="Cleavage; by autolysis" evidence="1">
    <location>
        <begin position="51"/>
        <end position="52"/>
    </location>
</feature>
<feature type="disulfide bond" description="Interchain (with C-10 in cleaved protease cofactor pVI-C)" evidence="1">
    <location>
        <position position="104"/>
    </location>
</feature>